<organism>
    <name type="scientific">Oleidesulfovibrio alaskensis (strain ATCC BAA-1058 / DSM 17464 / G20)</name>
    <name type="common">Desulfovibrio alaskensis</name>
    <dbReference type="NCBI Taxonomy" id="207559"/>
    <lineage>
        <taxon>Bacteria</taxon>
        <taxon>Pseudomonadati</taxon>
        <taxon>Thermodesulfobacteriota</taxon>
        <taxon>Desulfovibrionia</taxon>
        <taxon>Desulfovibrionales</taxon>
        <taxon>Desulfovibrionaceae</taxon>
        <taxon>Oleidesulfovibrio</taxon>
    </lineage>
</organism>
<feature type="chain" id="PRO_0000305440" description="Pantothenate synthetase">
    <location>
        <begin position="1"/>
        <end position="281"/>
    </location>
</feature>
<feature type="active site" description="Proton donor" evidence="1">
    <location>
        <position position="37"/>
    </location>
</feature>
<feature type="binding site" evidence="1">
    <location>
        <begin position="30"/>
        <end position="37"/>
    </location>
    <ligand>
        <name>ATP</name>
        <dbReference type="ChEBI" id="CHEBI:30616"/>
    </ligand>
</feature>
<feature type="binding site" evidence="1">
    <location>
        <position position="61"/>
    </location>
    <ligand>
        <name>(R)-pantoate</name>
        <dbReference type="ChEBI" id="CHEBI:15980"/>
    </ligand>
</feature>
<feature type="binding site" evidence="1">
    <location>
        <position position="61"/>
    </location>
    <ligand>
        <name>beta-alanine</name>
        <dbReference type="ChEBI" id="CHEBI:57966"/>
    </ligand>
</feature>
<feature type="binding site" evidence="1">
    <location>
        <begin position="147"/>
        <end position="150"/>
    </location>
    <ligand>
        <name>ATP</name>
        <dbReference type="ChEBI" id="CHEBI:30616"/>
    </ligand>
</feature>
<feature type="binding site" evidence="1">
    <location>
        <position position="153"/>
    </location>
    <ligand>
        <name>(R)-pantoate</name>
        <dbReference type="ChEBI" id="CHEBI:15980"/>
    </ligand>
</feature>
<feature type="binding site" evidence="1">
    <location>
        <position position="176"/>
    </location>
    <ligand>
        <name>ATP</name>
        <dbReference type="ChEBI" id="CHEBI:30616"/>
    </ligand>
</feature>
<feature type="binding site" evidence="1">
    <location>
        <begin position="184"/>
        <end position="187"/>
    </location>
    <ligand>
        <name>ATP</name>
        <dbReference type="ChEBI" id="CHEBI:30616"/>
    </ligand>
</feature>
<keyword id="KW-0067">ATP-binding</keyword>
<keyword id="KW-0963">Cytoplasm</keyword>
<keyword id="KW-0436">Ligase</keyword>
<keyword id="KW-0547">Nucleotide-binding</keyword>
<keyword id="KW-0566">Pantothenate biosynthesis</keyword>
<keyword id="KW-1185">Reference proteome</keyword>
<name>PANC_OLEA2</name>
<protein>
    <recommendedName>
        <fullName evidence="1">Pantothenate synthetase</fullName>
        <shortName evidence="1">PS</shortName>
        <ecNumber evidence="1">6.3.2.1</ecNumber>
    </recommendedName>
    <alternativeName>
        <fullName evidence="1">Pantoate--beta-alanine ligase</fullName>
    </alternativeName>
    <alternativeName>
        <fullName evidence="1">Pantoate-activating enzyme</fullName>
    </alternativeName>
</protein>
<comment type="function">
    <text evidence="1">Catalyzes the condensation of pantoate with beta-alanine in an ATP-dependent reaction via a pantoyl-adenylate intermediate.</text>
</comment>
<comment type="catalytic activity">
    <reaction evidence="1">
        <text>(R)-pantoate + beta-alanine + ATP = (R)-pantothenate + AMP + diphosphate + H(+)</text>
        <dbReference type="Rhea" id="RHEA:10912"/>
        <dbReference type="ChEBI" id="CHEBI:15378"/>
        <dbReference type="ChEBI" id="CHEBI:15980"/>
        <dbReference type="ChEBI" id="CHEBI:29032"/>
        <dbReference type="ChEBI" id="CHEBI:30616"/>
        <dbReference type="ChEBI" id="CHEBI:33019"/>
        <dbReference type="ChEBI" id="CHEBI:57966"/>
        <dbReference type="ChEBI" id="CHEBI:456215"/>
        <dbReference type="EC" id="6.3.2.1"/>
    </reaction>
</comment>
<comment type="pathway">
    <text evidence="1">Cofactor biosynthesis; (R)-pantothenate biosynthesis; (R)-pantothenate from (R)-pantoate and beta-alanine: step 1/1.</text>
</comment>
<comment type="subunit">
    <text evidence="1">Homodimer.</text>
</comment>
<comment type="subcellular location">
    <subcellularLocation>
        <location evidence="1">Cytoplasm</location>
    </subcellularLocation>
</comment>
<comment type="miscellaneous">
    <text evidence="1">The reaction proceeds by a bi uni uni bi ping pong mechanism.</text>
</comment>
<comment type="similarity">
    <text evidence="1">Belongs to the pantothenate synthetase family.</text>
</comment>
<reference key="1">
    <citation type="journal article" date="2011" name="J. Bacteriol.">
        <title>Complete genome sequence and updated annotation of Desulfovibrio alaskensis G20.</title>
        <authorList>
            <person name="Hauser L.J."/>
            <person name="Land M.L."/>
            <person name="Brown S.D."/>
            <person name="Larimer F."/>
            <person name="Keller K.L."/>
            <person name="Rapp-Giles B.J."/>
            <person name="Price M.N."/>
            <person name="Lin M."/>
            <person name="Bruce D.C."/>
            <person name="Detter J.C."/>
            <person name="Tapia R."/>
            <person name="Han C.S."/>
            <person name="Goodwin L.A."/>
            <person name="Cheng J.F."/>
            <person name="Pitluck S."/>
            <person name="Copeland A."/>
            <person name="Lucas S."/>
            <person name="Nolan M."/>
            <person name="Lapidus A.L."/>
            <person name="Palumbo A.V."/>
            <person name="Wall J.D."/>
        </authorList>
    </citation>
    <scope>NUCLEOTIDE SEQUENCE [LARGE SCALE GENOMIC DNA]</scope>
    <source>
        <strain>ATCC BAA-1058 / DSM 17464 / G20</strain>
    </source>
</reference>
<gene>
    <name evidence="1" type="primary">panC</name>
    <name type="ordered locus">Dde_1498</name>
</gene>
<accession>Q311U9</accession>
<sequence length="281" mass="31071">MQIITSPEELQRLCLDWRCGGVKTALVPTMGYYHAGHESLMAYARERADKVVVSLFVNPAQFAPGEDLAAYPRDLSGDAEVAQRAGADVLFTPQPEAMYPQGFDTWVEIPGLSSGLCGADRPGHFRGVCTVVMKLMLLTLPRLAVFGEKDWQQLAVLRRMAKDMHLPVTIDGCPIVRETDGLAMSSRNVYLTPEERRQAPALYQGLIRARDMVAGGERDTAVLRAAVKEYWKQHLPEGREDYLEIVHPDTLQPLERVGGMATCAAAVRLGRARLIDNLALI</sequence>
<dbReference type="EC" id="6.3.2.1" evidence="1"/>
<dbReference type="EMBL" id="CP000112">
    <property type="protein sequence ID" value="ABB38297.1"/>
    <property type="molecule type" value="Genomic_DNA"/>
</dbReference>
<dbReference type="RefSeq" id="WP_011367463.1">
    <property type="nucleotide sequence ID" value="NC_007519.1"/>
</dbReference>
<dbReference type="SMR" id="Q311U9"/>
<dbReference type="STRING" id="207559.Dde_1498"/>
<dbReference type="KEGG" id="dde:Dde_1498"/>
<dbReference type="eggNOG" id="COG0414">
    <property type="taxonomic scope" value="Bacteria"/>
</dbReference>
<dbReference type="HOGENOM" id="CLU_047148_0_0_7"/>
<dbReference type="UniPathway" id="UPA00028">
    <property type="reaction ID" value="UER00005"/>
</dbReference>
<dbReference type="Proteomes" id="UP000002710">
    <property type="component" value="Chromosome"/>
</dbReference>
<dbReference type="GO" id="GO:0005829">
    <property type="term" value="C:cytosol"/>
    <property type="evidence" value="ECO:0007669"/>
    <property type="project" value="TreeGrafter"/>
</dbReference>
<dbReference type="GO" id="GO:0005524">
    <property type="term" value="F:ATP binding"/>
    <property type="evidence" value="ECO:0007669"/>
    <property type="project" value="UniProtKB-KW"/>
</dbReference>
<dbReference type="GO" id="GO:0004592">
    <property type="term" value="F:pantoate-beta-alanine ligase activity"/>
    <property type="evidence" value="ECO:0007669"/>
    <property type="project" value="UniProtKB-UniRule"/>
</dbReference>
<dbReference type="GO" id="GO:0015940">
    <property type="term" value="P:pantothenate biosynthetic process"/>
    <property type="evidence" value="ECO:0007669"/>
    <property type="project" value="UniProtKB-UniRule"/>
</dbReference>
<dbReference type="CDD" id="cd00560">
    <property type="entry name" value="PanC"/>
    <property type="match status" value="1"/>
</dbReference>
<dbReference type="Gene3D" id="3.40.50.620">
    <property type="entry name" value="HUPs"/>
    <property type="match status" value="1"/>
</dbReference>
<dbReference type="Gene3D" id="3.30.1300.10">
    <property type="entry name" value="Pantoate-beta-alanine ligase, C-terminal domain"/>
    <property type="match status" value="1"/>
</dbReference>
<dbReference type="HAMAP" id="MF_00158">
    <property type="entry name" value="PanC"/>
    <property type="match status" value="1"/>
</dbReference>
<dbReference type="InterPro" id="IPR003721">
    <property type="entry name" value="Pantoate_ligase"/>
</dbReference>
<dbReference type="InterPro" id="IPR042176">
    <property type="entry name" value="Pantoate_ligase_C"/>
</dbReference>
<dbReference type="InterPro" id="IPR014729">
    <property type="entry name" value="Rossmann-like_a/b/a_fold"/>
</dbReference>
<dbReference type="NCBIfam" id="TIGR00018">
    <property type="entry name" value="panC"/>
    <property type="match status" value="1"/>
</dbReference>
<dbReference type="PANTHER" id="PTHR21299">
    <property type="entry name" value="CYTIDYLATE KINASE/PANTOATE-BETA-ALANINE LIGASE"/>
    <property type="match status" value="1"/>
</dbReference>
<dbReference type="PANTHER" id="PTHR21299:SF1">
    <property type="entry name" value="PANTOATE--BETA-ALANINE LIGASE"/>
    <property type="match status" value="1"/>
</dbReference>
<dbReference type="Pfam" id="PF02569">
    <property type="entry name" value="Pantoate_ligase"/>
    <property type="match status" value="1"/>
</dbReference>
<dbReference type="SUPFAM" id="SSF52374">
    <property type="entry name" value="Nucleotidylyl transferase"/>
    <property type="match status" value="1"/>
</dbReference>
<proteinExistence type="inferred from homology"/>
<evidence type="ECO:0000255" key="1">
    <source>
        <dbReference type="HAMAP-Rule" id="MF_00158"/>
    </source>
</evidence>